<comment type="function">
    <text evidence="1">Catalyzes the synthesis of GMP from XMP.</text>
</comment>
<comment type="catalytic activity">
    <reaction evidence="1">
        <text>XMP + L-glutamine + ATP + H2O = GMP + L-glutamate + AMP + diphosphate + 2 H(+)</text>
        <dbReference type="Rhea" id="RHEA:11680"/>
        <dbReference type="ChEBI" id="CHEBI:15377"/>
        <dbReference type="ChEBI" id="CHEBI:15378"/>
        <dbReference type="ChEBI" id="CHEBI:29985"/>
        <dbReference type="ChEBI" id="CHEBI:30616"/>
        <dbReference type="ChEBI" id="CHEBI:33019"/>
        <dbReference type="ChEBI" id="CHEBI:57464"/>
        <dbReference type="ChEBI" id="CHEBI:58115"/>
        <dbReference type="ChEBI" id="CHEBI:58359"/>
        <dbReference type="ChEBI" id="CHEBI:456215"/>
        <dbReference type="EC" id="6.3.5.2"/>
    </reaction>
</comment>
<comment type="pathway">
    <text evidence="1">Purine metabolism; GMP biosynthesis; GMP from XMP (L-Gln route): step 1/1.</text>
</comment>
<comment type="subunit">
    <text evidence="1">Heterodimer composed of a glutamine amidotransferase subunit (A) and a GMP-binding subunit (B).</text>
</comment>
<keyword id="KW-0067">ATP-binding</keyword>
<keyword id="KW-0315">Glutamine amidotransferase</keyword>
<keyword id="KW-0332">GMP biosynthesis</keyword>
<keyword id="KW-0436">Ligase</keyword>
<keyword id="KW-0547">Nucleotide-binding</keyword>
<keyword id="KW-0658">Purine biosynthesis</keyword>
<keyword id="KW-1185">Reference proteome</keyword>
<dbReference type="EC" id="6.3.5.2" evidence="1"/>
<dbReference type="EMBL" id="AE009439">
    <property type="protein sequence ID" value="AAM01766.1"/>
    <property type="molecule type" value="Genomic_DNA"/>
</dbReference>
<dbReference type="RefSeq" id="WP_011018921.1">
    <property type="nucleotide sequence ID" value="NC_003551.1"/>
</dbReference>
<dbReference type="SMR" id="Q8TXV8"/>
<dbReference type="FunCoup" id="Q8TXV8">
    <property type="interactions" value="26"/>
</dbReference>
<dbReference type="STRING" id="190192.MK0551"/>
<dbReference type="MEROPS" id="C26.A31"/>
<dbReference type="PaxDb" id="190192-MK0551"/>
<dbReference type="EnsemblBacteria" id="AAM01766">
    <property type="protein sequence ID" value="AAM01766"/>
    <property type="gene ID" value="MK0551"/>
</dbReference>
<dbReference type="GeneID" id="1476652"/>
<dbReference type="KEGG" id="mka:MK0551"/>
<dbReference type="PATRIC" id="fig|190192.8.peg.586"/>
<dbReference type="HOGENOM" id="CLU_014340_1_4_2"/>
<dbReference type="InParanoid" id="Q8TXV8"/>
<dbReference type="OrthoDB" id="10772at2157"/>
<dbReference type="UniPathway" id="UPA00189">
    <property type="reaction ID" value="UER00296"/>
</dbReference>
<dbReference type="Proteomes" id="UP000001826">
    <property type="component" value="Chromosome"/>
</dbReference>
<dbReference type="GO" id="GO:0005829">
    <property type="term" value="C:cytosol"/>
    <property type="evidence" value="ECO:0007669"/>
    <property type="project" value="TreeGrafter"/>
</dbReference>
<dbReference type="GO" id="GO:0005524">
    <property type="term" value="F:ATP binding"/>
    <property type="evidence" value="ECO:0007669"/>
    <property type="project" value="UniProtKB-KW"/>
</dbReference>
<dbReference type="GO" id="GO:0003921">
    <property type="term" value="F:GMP synthase activity"/>
    <property type="evidence" value="ECO:0007669"/>
    <property type="project" value="TreeGrafter"/>
</dbReference>
<dbReference type="CDD" id="cd01742">
    <property type="entry name" value="GATase1_GMP_Synthase"/>
    <property type="match status" value="1"/>
</dbReference>
<dbReference type="FunFam" id="3.40.50.880:FF:000047">
    <property type="entry name" value="GMP synthase [glutamine-hydrolyzing] subunit A"/>
    <property type="match status" value="1"/>
</dbReference>
<dbReference type="Gene3D" id="3.40.50.880">
    <property type="match status" value="1"/>
</dbReference>
<dbReference type="HAMAP" id="MF_01510">
    <property type="entry name" value="GMP_synthase_A"/>
    <property type="match status" value="1"/>
</dbReference>
<dbReference type="InterPro" id="IPR029062">
    <property type="entry name" value="Class_I_gatase-like"/>
</dbReference>
<dbReference type="InterPro" id="IPR017926">
    <property type="entry name" value="GATASE"/>
</dbReference>
<dbReference type="InterPro" id="IPR004739">
    <property type="entry name" value="GMP_synth_GATase"/>
</dbReference>
<dbReference type="InterPro" id="IPR023686">
    <property type="entry name" value="GMP_synthase_A"/>
</dbReference>
<dbReference type="NCBIfam" id="TIGR00888">
    <property type="entry name" value="guaA_Nterm"/>
    <property type="match status" value="1"/>
</dbReference>
<dbReference type="NCBIfam" id="NF001975">
    <property type="entry name" value="PRK00758.1"/>
    <property type="match status" value="1"/>
</dbReference>
<dbReference type="PANTHER" id="PTHR11922:SF2">
    <property type="entry name" value="GMP SYNTHASE [GLUTAMINE-HYDROLYZING]"/>
    <property type="match status" value="1"/>
</dbReference>
<dbReference type="PANTHER" id="PTHR11922">
    <property type="entry name" value="GMP SYNTHASE-RELATED"/>
    <property type="match status" value="1"/>
</dbReference>
<dbReference type="Pfam" id="PF00117">
    <property type="entry name" value="GATase"/>
    <property type="match status" value="1"/>
</dbReference>
<dbReference type="PRINTS" id="PR00097">
    <property type="entry name" value="ANTSNTHASEII"/>
</dbReference>
<dbReference type="PRINTS" id="PR00099">
    <property type="entry name" value="CPSGATASE"/>
</dbReference>
<dbReference type="PRINTS" id="PR00096">
    <property type="entry name" value="GATASE"/>
</dbReference>
<dbReference type="SUPFAM" id="SSF52317">
    <property type="entry name" value="Class I glutamine amidotransferase-like"/>
    <property type="match status" value="1"/>
</dbReference>
<dbReference type="PROSITE" id="PS51273">
    <property type="entry name" value="GATASE_TYPE_1"/>
    <property type="match status" value="1"/>
</dbReference>
<name>GUAAA_METKA</name>
<accession>Q8TXV8</accession>
<reference key="1">
    <citation type="journal article" date="2002" name="Proc. Natl. Acad. Sci. U.S.A.">
        <title>The complete genome of hyperthermophile Methanopyrus kandleri AV19 and monophyly of archaeal methanogens.</title>
        <authorList>
            <person name="Slesarev A.I."/>
            <person name="Mezhevaya K.V."/>
            <person name="Makarova K.S."/>
            <person name="Polushin N.N."/>
            <person name="Shcherbinina O.V."/>
            <person name="Shakhova V.V."/>
            <person name="Belova G.I."/>
            <person name="Aravind L."/>
            <person name="Natale D.A."/>
            <person name="Rogozin I.B."/>
            <person name="Tatusov R.L."/>
            <person name="Wolf Y.I."/>
            <person name="Stetter K.O."/>
            <person name="Malykh A.G."/>
            <person name="Koonin E.V."/>
            <person name="Kozyavkin S.A."/>
        </authorList>
    </citation>
    <scope>NUCLEOTIDE SEQUENCE [LARGE SCALE GENOMIC DNA]</scope>
    <source>
        <strain>AV19 / DSM 6324 / JCM 9639 / NBRC 100938</strain>
    </source>
</reference>
<evidence type="ECO:0000255" key="1">
    <source>
        <dbReference type="HAMAP-Rule" id="MF_01510"/>
    </source>
</evidence>
<organism>
    <name type="scientific">Methanopyrus kandleri (strain AV19 / DSM 6324 / JCM 9639 / NBRC 100938)</name>
    <dbReference type="NCBI Taxonomy" id="190192"/>
    <lineage>
        <taxon>Archaea</taxon>
        <taxon>Methanobacteriati</taxon>
        <taxon>Methanobacteriota</taxon>
        <taxon>Methanomada group</taxon>
        <taxon>Methanopyri</taxon>
        <taxon>Methanopyrales</taxon>
        <taxon>Methanopyraceae</taxon>
        <taxon>Methanopyrus</taxon>
    </lineage>
</organism>
<proteinExistence type="inferred from homology"/>
<gene>
    <name evidence="1" type="primary">guaAA</name>
    <name type="synonym">guaA_2</name>
    <name type="ordered locus">MK0551</name>
</gene>
<protein>
    <recommendedName>
        <fullName evidence="1">GMP synthase [glutamine-hydrolyzing] subunit A</fullName>
        <ecNumber evidence="1">6.3.5.2</ecNumber>
    </recommendedName>
    <alternativeName>
        <fullName evidence="1">Glutamine amidotransferase</fullName>
    </alternativeName>
</protein>
<feature type="chain" id="PRO_0000140222" description="GMP synthase [glutamine-hydrolyzing] subunit A">
    <location>
        <begin position="1"/>
        <end position="187"/>
    </location>
</feature>
<feature type="domain" description="Glutamine amidotransferase type-1" evidence="1">
    <location>
        <begin position="1"/>
        <end position="187"/>
    </location>
</feature>
<feature type="active site" description="Nucleophile" evidence="1">
    <location>
        <position position="76"/>
    </location>
</feature>
<feature type="active site" evidence="1">
    <location>
        <position position="164"/>
    </location>
</feature>
<feature type="active site" evidence="1">
    <location>
        <position position="166"/>
    </location>
</feature>
<sequence>MILIIDNHGQYVHLIRKNFDYMGVPAEIIPNTTDPEDVRERASGVVISGGPSRERAGNSREIIEELTGEVPILGICLGHQLMAEVFGGKVDWAAGREEYARTEVEILDHEGIFEGLPDKIVAWASHRDEVKEVPDEFVVTARSDRCEVEAMRHEELPLYGVQFHPELKFTEYGPDILKNFAKLCGEL</sequence>